<comment type="function">
    <text evidence="1">RuBisCO catalyzes two reactions: the carboxylation of D-ribulose 1,5-bisphosphate, the primary event in carbon dioxide fixation, as well as the oxidative fragmentation of the pentose substrate in the photorespiration process. Both reactions occur simultaneously and in competition at the same active site.</text>
</comment>
<comment type="catalytic activity">
    <reaction evidence="1">
        <text>2 (2R)-3-phosphoglycerate + 2 H(+) = D-ribulose 1,5-bisphosphate + CO2 + H2O</text>
        <dbReference type="Rhea" id="RHEA:23124"/>
        <dbReference type="ChEBI" id="CHEBI:15377"/>
        <dbReference type="ChEBI" id="CHEBI:15378"/>
        <dbReference type="ChEBI" id="CHEBI:16526"/>
        <dbReference type="ChEBI" id="CHEBI:57870"/>
        <dbReference type="ChEBI" id="CHEBI:58272"/>
        <dbReference type="EC" id="4.1.1.39"/>
    </reaction>
</comment>
<comment type="catalytic activity">
    <reaction evidence="1">
        <text>D-ribulose 1,5-bisphosphate + O2 = 2-phosphoglycolate + (2R)-3-phosphoglycerate + 2 H(+)</text>
        <dbReference type="Rhea" id="RHEA:36631"/>
        <dbReference type="ChEBI" id="CHEBI:15378"/>
        <dbReference type="ChEBI" id="CHEBI:15379"/>
        <dbReference type="ChEBI" id="CHEBI:57870"/>
        <dbReference type="ChEBI" id="CHEBI:58033"/>
        <dbReference type="ChEBI" id="CHEBI:58272"/>
    </reaction>
</comment>
<comment type="cofactor">
    <cofactor evidence="1">
        <name>Mg(2+)</name>
        <dbReference type="ChEBI" id="CHEBI:18420"/>
    </cofactor>
    <text evidence="1">Binds 1 Mg(2+) ion per subunit.</text>
</comment>
<comment type="subunit">
    <text evidence="1">Heterohexadecamer of 8 large chains and 8 small chains.</text>
</comment>
<comment type="subcellular location">
    <subcellularLocation>
        <location>Plastid</location>
        <location>Chloroplast</location>
    </subcellularLocation>
</comment>
<comment type="miscellaneous">
    <text evidence="1">The basic functional RuBisCO is composed of a large chain homodimer in a 'head-to-tail' conformation. In form I RuBisCO this homodimer is arranged in a barrel-like tetramer with the small subunits forming a tetrameric 'cap' on each end of the 'barrel'.</text>
</comment>
<comment type="similarity">
    <text evidence="1">Belongs to the RuBisCO large chain family. Type I subfamily.</text>
</comment>
<feature type="chain" id="PRO_0000275373" description="Ribulose bisphosphate carboxylase large chain">
    <location>
        <begin position="1"/>
        <end position="490"/>
    </location>
</feature>
<feature type="active site" description="Proton acceptor" evidence="1">
    <location>
        <position position="179"/>
    </location>
</feature>
<feature type="active site" description="Proton acceptor" evidence="1">
    <location>
        <position position="297"/>
    </location>
</feature>
<feature type="binding site" description="in homodimeric partner" evidence="1">
    <location>
        <position position="127"/>
    </location>
    <ligand>
        <name>substrate</name>
    </ligand>
</feature>
<feature type="binding site" evidence="1">
    <location>
        <position position="177"/>
    </location>
    <ligand>
        <name>substrate</name>
    </ligand>
</feature>
<feature type="binding site" evidence="1">
    <location>
        <position position="181"/>
    </location>
    <ligand>
        <name>substrate</name>
    </ligand>
</feature>
<feature type="binding site" description="via carbamate group" evidence="1">
    <location>
        <position position="205"/>
    </location>
    <ligand>
        <name>Mg(2+)</name>
        <dbReference type="ChEBI" id="CHEBI:18420"/>
    </ligand>
</feature>
<feature type="binding site" evidence="1">
    <location>
        <position position="207"/>
    </location>
    <ligand>
        <name>Mg(2+)</name>
        <dbReference type="ChEBI" id="CHEBI:18420"/>
    </ligand>
</feature>
<feature type="binding site" evidence="1">
    <location>
        <position position="208"/>
    </location>
    <ligand>
        <name>Mg(2+)</name>
        <dbReference type="ChEBI" id="CHEBI:18420"/>
    </ligand>
</feature>
<feature type="binding site" evidence="1">
    <location>
        <position position="298"/>
    </location>
    <ligand>
        <name>substrate</name>
    </ligand>
</feature>
<feature type="binding site" evidence="1">
    <location>
        <position position="330"/>
    </location>
    <ligand>
        <name>substrate</name>
    </ligand>
</feature>
<feature type="binding site" evidence="1">
    <location>
        <position position="382"/>
    </location>
    <ligand>
        <name>substrate</name>
    </ligand>
</feature>
<feature type="site" description="Transition state stabilizer" evidence="1">
    <location>
        <position position="337"/>
    </location>
</feature>
<feature type="modified residue" description="N6-carboxylysine" evidence="1">
    <location>
        <position position="205"/>
    </location>
</feature>
<geneLocation type="chloroplast"/>
<name>RBL_PHATC</name>
<protein>
    <recommendedName>
        <fullName evidence="1">Ribulose bisphosphate carboxylase large chain</fullName>
        <shortName evidence="1">RuBisCO large subunit</shortName>
        <ecNumber evidence="1">4.1.1.39</ecNumber>
    </recommendedName>
</protein>
<organism>
    <name type="scientific">Phaeodactylum tricornutum (strain CCAP 1055/1)</name>
    <dbReference type="NCBI Taxonomy" id="556484"/>
    <lineage>
        <taxon>Eukaryota</taxon>
        <taxon>Sar</taxon>
        <taxon>Stramenopiles</taxon>
        <taxon>Ochrophyta</taxon>
        <taxon>Bacillariophyta</taxon>
        <taxon>Bacillariophyceae</taxon>
        <taxon>Bacillariophycidae</taxon>
        <taxon>Naviculales</taxon>
        <taxon>Phaeodactylaceae</taxon>
        <taxon>Phaeodactylum</taxon>
    </lineage>
</organism>
<evidence type="ECO:0000255" key="1">
    <source>
        <dbReference type="HAMAP-Rule" id="MF_01338"/>
    </source>
</evidence>
<dbReference type="EC" id="4.1.1.39" evidence="1"/>
<dbReference type="EMBL" id="EF067920">
    <property type="protein sequence ID" value="ABK20641.1"/>
    <property type="molecule type" value="Genomic_DNA"/>
</dbReference>
<dbReference type="RefSeq" id="YP_874418.1">
    <property type="nucleotide sequence ID" value="NC_008588.1"/>
</dbReference>
<dbReference type="PDB" id="7YK5">
    <property type="method" value="EM"/>
    <property type="resolution" value="2.00 A"/>
    <property type="chains" value="A/B/C/D/E/F/G/H=1-490"/>
</dbReference>
<dbReference type="PDBsum" id="7YK5"/>
<dbReference type="EMDB" id="EMD-33887"/>
<dbReference type="SMR" id="Q9TK52"/>
<dbReference type="STRING" id="556484.Q9TK52"/>
<dbReference type="GeneID" id="4524593"/>
<dbReference type="InParanoid" id="Q9TK52"/>
<dbReference type="Proteomes" id="UP000000759">
    <property type="component" value="Chloroplast"/>
</dbReference>
<dbReference type="GO" id="GO:0009507">
    <property type="term" value="C:chloroplast"/>
    <property type="evidence" value="ECO:0007669"/>
    <property type="project" value="UniProtKB-SubCell"/>
</dbReference>
<dbReference type="GO" id="GO:0000287">
    <property type="term" value="F:magnesium ion binding"/>
    <property type="evidence" value="ECO:0007669"/>
    <property type="project" value="UniProtKB-UniRule"/>
</dbReference>
<dbReference type="GO" id="GO:0004497">
    <property type="term" value="F:monooxygenase activity"/>
    <property type="evidence" value="ECO:0007669"/>
    <property type="project" value="UniProtKB-KW"/>
</dbReference>
<dbReference type="GO" id="GO:0016984">
    <property type="term" value="F:ribulose-bisphosphate carboxylase activity"/>
    <property type="evidence" value="ECO:0007669"/>
    <property type="project" value="UniProtKB-UniRule"/>
</dbReference>
<dbReference type="GO" id="GO:0019253">
    <property type="term" value="P:reductive pentose-phosphate cycle"/>
    <property type="evidence" value="ECO:0007669"/>
    <property type="project" value="UniProtKB-UniRule"/>
</dbReference>
<dbReference type="CDD" id="cd08212">
    <property type="entry name" value="RuBisCO_large_I"/>
    <property type="match status" value="1"/>
</dbReference>
<dbReference type="Gene3D" id="3.20.20.110">
    <property type="entry name" value="Ribulose bisphosphate carboxylase, large subunit, C-terminal domain"/>
    <property type="match status" value="1"/>
</dbReference>
<dbReference type="Gene3D" id="3.30.70.150">
    <property type="entry name" value="RuBisCO large subunit, N-terminal domain"/>
    <property type="match status" value="1"/>
</dbReference>
<dbReference type="HAMAP" id="MF_01338">
    <property type="entry name" value="RuBisCO_L_type1"/>
    <property type="match status" value="1"/>
</dbReference>
<dbReference type="InterPro" id="IPR033966">
    <property type="entry name" value="RuBisCO"/>
</dbReference>
<dbReference type="InterPro" id="IPR020878">
    <property type="entry name" value="RuBisCo_large_chain_AS"/>
</dbReference>
<dbReference type="InterPro" id="IPR000685">
    <property type="entry name" value="RuBisCO_lsu_C"/>
</dbReference>
<dbReference type="InterPro" id="IPR036376">
    <property type="entry name" value="RuBisCO_lsu_C_sf"/>
</dbReference>
<dbReference type="InterPro" id="IPR017443">
    <property type="entry name" value="RuBisCO_lsu_fd_N"/>
</dbReference>
<dbReference type="InterPro" id="IPR036422">
    <property type="entry name" value="RuBisCO_lsu_N_sf"/>
</dbReference>
<dbReference type="InterPro" id="IPR020888">
    <property type="entry name" value="RuBisCO_lsuI"/>
</dbReference>
<dbReference type="NCBIfam" id="NF003252">
    <property type="entry name" value="PRK04208.1"/>
    <property type="match status" value="1"/>
</dbReference>
<dbReference type="PANTHER" id="PTHR42704">
    <property type="entry name" value="RIBULOSE BISPHOSPHATE CARBOXYLASE"/>
    <property type="match status" value="1"/>
</dbReference>
<dbReference type="PANTHER" id="PTHR42704:SF17">
    <property type="entry name" value="RIBULOSE BISPHOSPHATE CARBOXYLASE LARGE CHAIN"/>
    <property type="match status" value="1"/>
</dbReference>
<dbReference type="Pfam" id="PF00016">
    <property type="entry name" value="RuBisCO_large"/>
    <property type="match status" value="1"/>
</dbReference>
<dbReference type="Pfam" id="PF02788">
    <property type="entry name" value="RuBisCO_large_N"/>
    <property type="match status" value="1"/>
</dbReference>
<dbReference type="SFLD" id="SFLDG01052">
    <property type="entry name" value="RuBisCO"/>
    <property type="match status" value="1"/>
</dbReference>
<dbReference type="SFLD" id="SFLDS00014">
    <property type="entry name" value="RuBisCO"/>
    <property type="match status" value="1"/>
</dbReference>
<dbReference type="SFLD" id="SFLDG00301">
    <property type="entry name" value="RuBisCO-like_proteins"/>
    <property type="match status" value="1"/>
</dbReference>
<dbReference type="SUPFAM" id="SSF51649">
    <property type="entry name" value="RuBisCo, C-terminal domain"/>
    <property type="match status" value="1"/>
</dbReference>
<dbReference type="SUPFAM" id="SSF54966">
    <property type="entry name" value="RuBisCO, large subunit, small (N-terminal) domain"/>
    <property type="match status" value="1"/>
</dbReference>
<dbReference type="PROSITE" id="PS00157">
    <property type="entry name" value="RUBISCO_LARGE"/>
    <property type="match status" value="1"/>
</dbReference>
<sequence length="490" mass="54007">MSQSVSERTRIKSDRYESGVIPYAKMGYWDAAYAVKNTDVLALFRITPQPGVDPVEAAAAVAGESSTATWTVVWTDLLTACDRYRAKAYRVDPVPNTTDQYFAFIAYECDLFEEGSLANLTASIIGNVFGFKAVSALRLEDMRIPHSYLKTFQGPATGVIVERERLNKYGIPLLGATVKPKLGLSGKNYGRVVYEGLKGGLDFLKDDENINSQPFMRWRERFLYCMEGINRASAATGETKGSYLNITAGTMEEVYKRAEYAKTVGSIVVMIDLVMGYTAIQSAAIWARDNDLILHLHRAGNSTYARQKNHGINFRVICKWMRMCGVDHIHAGTVVGKLEGDPLMIKGFYDTLLLTHLNVNLPYGIFFEMTWASLRKCMPVASGGIHCGQMHQLVHYLGDDVVLQFGGGTIGHPDGIQAGATANRVALEAMILARNEGADYFNSDIGPQILRNAAKTCGPLQTALDLWKDISFNYTSTDTSDFSVTPTANV</sequence>
<keyword id="KW-0002">3D-structure</keyword>
<keyword id="KW-0113">Calvin cycle</keyword>
<keyword id="KW-0120">Carbon dioxide fixation</keyword>
<keyword id="KW-0150">Chloroplast</keyword>
<keyword id="KW-0456">Lyase</keyword>
<keyword id="KW-0460">Magnesium</keyword>
<keyword id="KW-0479">Metal-binding</keyword>
<keyword id="KW-0503">Monooxygenase</keyword>
<keyword id="KW-0560">Oxidoreductase</keyword>
<keyword id="KW-0601">Photorespiration</keyword>
<keyword id="KW-0602">Photosynthesis</keyword>
<keyword id="KW-0934">Plastid</keyword>
<keyword id="KW-1185">Reference proteome</keyword>
<proteinExistence type="evidence at protein level"/>
<accession>Q9TK52</accession>
<reference key="1">
    <citation type="journal article" date="2007" name="Mol. Genet. Genomics">
        <title>Chloroplast genomes of the diatoms Phaeodactylum tricornutum and Thalassiosira pseudonana: comparison with other plastid genomes of the red lineage.</title>
        <authorList>
            <person name="Oudot-Le Secq M.-P."/>
            <person name="Grimwood J."/>
            <person name="Shapiro H."/>
            <person name="Armbrust E.V."/>
            <person name="Bowler C."/>
            <person name="Green B.R."/>
        </authorList>
    </citation>
    <scope>NUCLEOTIDE SEQUENCE [LARGE SCALE GENOMIC DNA]</scope>
    <source>
        <strain>CCAP 1055/1</strain>
    </source>
</reference>
<gene>
    <name evidence="1" type="primary">rbcL</name>
</gene>